<evidence type="ECO:0000255" key="1">
    <source>
        <dbReference type="HAMAP-Rule" id="MF_00156"/>
    </source>
</evidence>
<organism>
    <name type="scientific">Synechococcus sp. (strain ATCC 27144 / PCC 6301 / SAUG 1402/1)</name>
    <name type="common">Anacystis nidulans</name>
    <dbReference type="NCBI Taxonomy" id="269084"/>
    <lineage>
        <taxon>Bacteria</taxon>
        <taxon>Bacillati</taxon>
        <taxon>Cyanobacteriota</taxon>
        <taxon>Cyanophyceae</taxon>
        <taxon>Synechococcales</taxon>
        <taxon>Synechococcaceae</taxon>
        <taxon>Synechococcus</taxon>
    </lineage>
</organism>
<proteinExistence type="inferred from homology"/>
<gene>
    <name evidence="1" type="primary">panB</name>
    <name type="ordered locus">syc1724_c</name>
</gene>
<accession>Q5N1A6</accession>
<protein>
    <recommendedName>
        <fullName evidence="1">3-methyl-2-oxobutanoate hydroxymethyltransferase</fullName>
        <ecNumber evidence="1">2.1.2.11</ecNumber>
    </recommendedName>
    <alternativeName>
        <fullName evidence="1">Ketopantoate hydroxymethyltransferase</fullName>
        <shortName evidence="1">KPHMT</shortName>
    </alternativeName>
</protein>
<keyword id="KW-0963">Cytoplasm</keyword>
<keyword id="KW-0460">Magnesium</keyword>
<keyword id="KW-0479">Metal-binding</keyword>
<keyword id="KW-0566">Pantothenate biosynthesis</keyword>
<keyword id="KW-0808">Transferase</keyword>
<name>PANB_SYNP6</name>
<feature type="chain" id="PRO_0000184899" description="3-methyl-2-oxobutanoate hydroxymethyltransferase">
    <location>
        <begin position="1"/>
        <end position="268"/>
    </location>
</feature>
<feature type="active site" description="Proton acceptor" evidence="1">
    <location>
        <position position="182"/>
    </location>
</feature>
<feature type="binding site" evidence="1">
    <location>
        <begin position="44"/>
        <end position="45"/>
    </location>
    <ligand>
        <name>3-methyl-2-oxobutanoate</name>
        <dbReference type="ChEBI" id="CHEBI:11851"/>
    </ligand>
</feature>
<feature type="binding site" evidence="1">
    <location>
        <position position="44"/>
    </location>
    <ligand>
        <name>Mg(2+)</name>
        <dbReference type="ChEBI" id="CHEBI:18420"/>
    </ligand>
</feature>
<feature type="binding site" evidence="1">
    <location>
        <position position="83"/>
    </location>
    <ligand>
        <name>3-methyl-2-oxobutanoate</name>
        <dbReference type="ChEBI" id="CHEBI:11851"/>
    </ligand>
</feature>
<feature type="binding site" evidence="1">
    <location>
        <position position="83"/>
    </location>
    <ligand>
        <name>Mg(2+)</name>
        <dbReference type="ChEBI" id="CHEBI:18420"/>
    </ligand>
</feature>
<feature type="binding site" evidence="1">
    <location>
        <position position="113"/>
    </location>
    <ligand>
        <name>3-methyl-2-oxobutanoate</name>
        <dbReference type="ChEBI" id="CHEBI:11851"/>
    </ligand>
</feature>
<feature type="binding site" evidence="1">
    <location>
        <position position="115"/>
    </location>
    <ligand>
        <name>Mg(2+)</name>
        <dbReference type="ChEBI" id="CHEBI:18420"/>
    </ligand>
</feature>
<sequence>MPITPRHLRQWKQQGRPIVALTAWDFAIASILDEAGIDLVLVGDSLAMVALGHPTTLPLSLEDMIHHVQAVQRGCRNALIVSDLPFLSYQTSPEDAILAAGQLLKVTEAQAVKLEGGYPRLLETVQRLVEVGIPVMGHVGLTPQSVRQLGYRQQGQTPEAQQQILDQALALEAAGAFAIVLEHIPDRLAAMITAKLSIPTIGIGAGPNCDGQILVTADLLGLTPSQPPFAPAYLNLRQAIGSAVQRYAREVRDRQFLQSQPAEQEPLS</sequence>
<reference key="1">
    <citation type="journal article" date="2007" name="Photosyn. Res.">
        <title>Complete nucleotide sequence of the freshwater unicellular cyanobacterium Synechococcus elongatus PCC 6301 chromosome: gene content and organization.</title>
        <authorList>
            <person name="Sugita C."/>
            <person name="Ogata K."/>
            <person name="Shikata M."/>
            <person name="Jikuya H."/>
            <person name="Takano J."/>
            <person name="Furumichi M."/>
            <person name="Kanehisa M."/>
            <person name="Omata T."/>
            <person name="Sugiura M."/>
            <person name="Sugita M."/>
        </authorList>
    </citation>
    <scope>NUCLEOTIDE SEQUENCE [LARGE SCALE GENOMIC DNA]</scope>
    <source>
        <strain>ATCC 27144 / PCC 6301 / SAUG 1402/1</strain>
    </source>
</reference>
<comment type="function">
    <text evidence="1">Catalyzes the reversible reaction in which hydroxymethyl group from 5,10-methylenetetrahydrofolate is transferred onto alpha-ketoisovalerate to form ketopantoate.</text>
</comment>
<comment type="catalytic activity">
    <reaction evidence="1">
        <text>3-methyl-2-oxobutanoate + (6R)-5,10-methylene-5,6,7,8-tetrahydrofolate + H2O = 2-dehydropantoate + (6S)-5,6,7,8-tetrahydrofolate</text>
        <dbReference type="Rhea" id="RHEA:11824"/>
        <dbReference type="ChEBI" id="CHEBI:11561"/>
        <dbReference type="ChEBI" id="CHEBI:11851"/>
        <dbReference type="ChEBI" id="CHEBI:15377"/>
        <dbReference type="ChEBI" id="CHEBI:15636"/>
        <dbReference type="ChEBI" id="CHEBI:57453"/>
        <dbReference type="EC" id="2.1.2.11"/>
    </reaction>
</comment>
<comment type="cofactor">
    <cofactor evidence="1">
        <name>Mg(2+)</name>
        <dbReference type="ChEBI" id="CHEBI:18420"/>
    </cofactor>
    <text evidence="1">Binds 1 Mg(2+) ion per subunit.</text>
</comment>
<comment type="pathway">
    <text evidence="1">Cofactor biosynthesis; (R)-pantothenate biosynthesis; (R)-pantoate from 3-methyl-2-oxobutanoate: step 1/2.</text>
</comment>
<comment type="subunit">
    <text evidence="1">Homodecamer; pentamer of dimers.</text>
</comment>
<comment type="subcellular location">
    <subcellularLocation>
        <location evidence="1">Cytoplasm</location>
    </subcellularLocation>
</comment>
<comment type="similarity">
    <text evidence="1">Belongs to the PanB family.</text>
</comment>
<dbReference type="EC" id="2.1.2.11" evidence="1"/>
<dbReference type="EMBL" id="AP008231">
    <property type="protein sequence ID" value="BAD79914.1"/>
    <property type="molecule type" value="Genomic_DNA"/>
</dbReference>
<dbReference type="RefSeq" id="WP_011244034.1">
    <property type="nucleotide sequence ID" value="NZ_CP085785.1"/>
</dbReference>
<dbReference type="SMR" id="Q5N1A6"/>
<dbReference type="GeneID" id="72431270"/>
<dbReference type="KEGG" id="syc:syc1724_c"/>
<dbReference type="eggNOG" id="COG0413">
    <property type="taxonomic scope" value="Bacteria"/>
</dbReference>
<dbReference type="UniPathway" id="UPA00028">
    <property type="reaction ID" value="UER00003"/>
</dbReference>
<dbReference type="Proteomes" id="UP000001175">
    <property type="component" value="Chromosome"/>
</dbReference>
<dbReference type="GO" id="GO:0005737">
    <property type="term" value="C:cytoplasm"/>
    <property type="evidence" value="ECO:0007669"/>
    <property type="project" value="UniProtKB-SubCell"/>
</dbReference>
<dbReference type="GO" id="GO:0003864">
    <property type="term" value="F:3-methyl-2-oxobutanoate hydroxymethyltransferase activity"/>
    <property type="evidence" value="ECO:0007669"/>
    <property type="project" value="UniProtKB-UniRule"/>
</dbReference>
<dbReference type="GO" id="GO:0000287">
    <property type="term" value="F:magnesium ion binding"/>
    <property type="evidence" value="ECO:0007669"/>
    <property type="project" value="TreeGrafter"/>
</dbReference>
<dbReference type="GO" id="GO:0015940">
    <property type="term" value="P:pantothenate biosynthetic process"/>
    <property type="evidence" value="ECO:0007669"/>
    <property type="project" value="UniProtKB-UniRule"/>
</dbReference>
<dbReference type="CDD" id="cd06557">
    <property type="entry name" value="KPHMT-like"/>
    <property type="match status" value="1"/>
</dbReference>
<dbReference type="FunFam" id="3.20.20.60:FF:000003">
    <property type="entry name" value="3-methyl-2-oxobutanoate hydroxymethyltransferase"/>
    <property type="match status" value="1"/>
</dbReference>
<dbReference type="Gene3D" id="3.20.20.60">
    <property type="entry name" value="Phosphoenolpyruvate-binding domains"/>
    <property type="match status" value="1"/>
</dbReference>
<dbReference type="HAMAP" id="MF_00156">
    <property type="entry name" value="PanB"/>
    <property type="match status" value="1"/>
</dbReference>
<dbReference type="InterPro" id="IPR003700">
    <property type="entry name" value="Pantoate_hydroxy_MeTrfase"/>
</dbReference>
<dbReference type="InterPro" id="IPR015813">
    <property type="entry name" value="Pyrv/PenolPyrv_kinase-like_dom"/>
</dbReference>
<dbReference type="InterPro" id="IPR040442">
    <property type="entry name" value="Pyrv_kinase-like_dom_sf"/>
</dbReference>
<dbReference type="NCBIfam" id="TIGR00222">
    <property type="entry name" value="panB"/>
    <property type="match status" value="1"/>
</dbReference>
<dbReference type="NCBIfam" id="NF001452">
    <property type="entry name" value="PRK00311.1"/>
    <property type="match status" value="1"/>
</dbReference>
<dbReference type="PANTHER" id="PTHR20881">
    <property type="entry name" value="3-METHYL-2-OXOBUTANOATE HYDROXYMETHYLTRANSFERASE"/>
    <property type="match status" value="1"/>
</dbReference>
<dbReference type="PANTHER" id="PTHR20881:SF0">
    <property type="entry name" value="3-METHYL-2-OXOBUTANOATE HYDROXYMETHYLTRANSFERASE"/>
    <property type="match status" value="1"/>
</dbReference>
<dbReference type="Pfam" id="PF02548">
    <property type="entry name" value="Pantoate_transf"/>
    <property type="match status" value="1"/>
</dbReference>
<dbReference type="PIRSF" id="PIRSF000388">
    <property type="entry name" value="Pantoate_hydroxy_MeTrfase"/>
    <property type="match status" value="1"/>
</dbReference>
<dbReference type="SUPFAM" id="SSF51621">
    <property type="entry name" value="Phosphoenolpyruvate/pyruvate domain"/>
    <property type="match status" value="1"/>
</dbReference>